<sequence>MKAVVLAVAVLFLTGSQARHFWQGDEPQTSWDRMKDFAALYVDAIQESGKDCAAQLDASALGKQLNLNLLANWNTLTSTFNNLREQLGSVTKEFWDNLGEDTVWLRQQMNKDLEEVKQKVQSYLDNFQKKVNEEVERYRDKVQPLGKELHKDAQQKLKELQEKLAPLGQDIRQRAREYVDALRTHLGSYTQGMRQGLAKRLEALKESAPVSEYQVKASKHLKTFSEKAKPALEDLRQGLMPVMESLKASFLSSIDQASKQLSAQ</sequence>
<name>APOA1_HETGA</name>
<protein>
    <recommendedName>
        <fullName>Apolipoprotein A-I</fullName>
        <shortName>Apo-AI</shortName>
        <shortName>ApoA-I</shortName>
    </recommendedName>
    <alternativeName>
        <fullName>Apolipoprotein A1</fullName>
    </alternativeName>
    <component>
        <recommendedName>
            <fullName>Proapolipoprotein A-I</fullName>
            <shortName>ProapoA-I</shortName>
        </recommendedName>
    </component>
    <component>
        <recommendedName>
            <fullName>Truncated apolipoprotein A-I</fullName>
        </recommendedName>
    </component>
</protein>
<reference key="1">
    <citation type="journal article" date="2011" name="Nature">
        <title>Genome sequencing reveals insights into physiology and longevity of the naked mole rat.</title>
        <authorList>
            <person name="Kim E.B."/>
            <person name="Fang X."/>
            <person name="Fushan A.A."/>
            <person name="Huang Z."/>
            <person name="Lobanov A.V."/>
            <person name="Han L."/>
            <person name="Marino S.M."/>
            <person name="Sun X."/>
            <person name="Turanov A.A."/>
            <person name="Yang P."/>
            <person name="Yim S.H."/>
            <person name="Zhao X."/>
            <person name="Kasaikina M.V."/>
            <person name="Stoletzki N."/>
            <person name="Peng C."/>
            <person name="Polak P."/>
            <person name="Xiong Z."/>
            <person name="Kiezun A."/>
            <person name="Zhu Y."/>
            <person name="Chen Y."/>
            <person name="Kryukov G.V."/>
            <person name="Zhang Q."/>
            <person name="Peshkin L."/>
            <person name="Yang L."/>
            <person name="Bronson R.T."/>
            <person name="Buffenstein R."/>
            <person name="Wang B."/>
            <person name="Han C."/>
            <person name="Li Q."/>
            <person name="Chen L."/>
            <person name="Zhao W."/>
            <person name="Sunyaev S.R."/>
            <person name="Park T.J."/>
            <person name="Zhang G."/>
            <person name="Wang J."/>
            <person name="Gladyshev V.N."/>
        </authorList>
    </citation>
    <scope>NUCLEOTIDE SEQUENCE [LARGE SCALE GENOMIC DNA]</scope>
</reference>
<reference key="2">
    <citation type="journal article" date="2021" name="Lipids">
        <title>Naked Mole-Rat, a Rodent with an Apolipoprotein A-I Dimer.</title>
        <authorList>
            <person name="Puppione D.L."/>
            <person name="Tran D.P."/>
            <person name="Zenaidee M.A."/>
            <person name="Charugundla S."/>
            <person name="Whitelegge J.P."/>
            <person name="Buffenstein R."/>
        </authorList>
    </citation>
    <scope>SUBUNIT</scope>
    <scope>MASS SPECTROMETRY</scope>
</reference>
<comment type="function">
    <text evidence="1">Participates in the reverse transport of cholesterol from tissues to the liver for excretion by promoting cholesterol efflux from tissues and by acting as a cofactor for the lecithin cholesterol acyltransferase (LCAT). As part of the SPAP complex, activates spermatozoa motility (By similarity).</text>
</comment>
<comment type="subunit">
    <text evidence="2 3 5">Homodimer (PubMed:33336429). Interacts with APOA1BP and CLU. Component of a sperm activating protein complex (SPAP), consisting of APOA1, an immunoglobulin heavy chain, an immunoglobulin light chain and albumin. Interacts with NDRG1. Interacts with SCGB3A2 (By similarity). Interacts with NAXE and YJEFN3 (By similarity).</text>
</comment>
<comment type="subcellular location">
    <subcellularLocation>
        <location>Secreted</location>
    </subcellularLocation>
</comment>
<comment type="tissue specificity">
    <text>Major protein of plasma HDL, also found in chylomicrons.</text>
</comment>
<comment type="PTM">
    <text evidence="1">Glycosylated.</text>
</comment>
<comment type="PTM">
    <text evidence="1">Palmitoylated.</text>
</comment>
<comment type="PTM">
    <text evidence="1">Phosphorylation sites are present in the extracellular medium.</text>
</comment>
<comment type="mass spectrometry">
    <molecule>Apolipoprotein A-I</molecule>
    <text>Homodimer.</text>
</comment>
<comment type="mass spectrometry">
    <molecule>Apolipoprotein A-I</molecule>
    <text>Monomer.</text>
</comment>
<comment type="similarity">
    <text evidence="6">Belongs to the apolipoprotein A1/A4/E family.</text>
</comment>
<dbReference type="EMBL" id="JH171387">
    <property type="protein sequence ID" value="EHB11536.1"/>
    <property type="molecule type" value="Genomic_DNA"/>
</dbReference>
<dbReference type="RefSeq" id="XP_004856701.1">
    <property type="nucleotide sequence ID" value="XM_004856644.3"/>
</dbReference>
<dbReference type="SMR" id="G5BQH5"/>
<dbReference type="STRING" id="10181.G5BQH5"/>
<dbReference type="GeneID" id="101725714"/>
<dbReference type="KEGG" id="hgl:101725714"/>
<dbReference type="CTD" id="335"/>
<dbReference type="eggNOG" id="ENOG502S1XQ">
    <property type="taxonomic scope" value="Eukaryota"/>
</dbReference>
<dbReference type="InParanoid" id="G5BQH5"/>
<dbReference type="OrthoDB" id="8727817at2759"/>
<dbReference type="Proteomes" id="UP000006813">
    <property type="component" value="Unassembled WGS sequence"/>
</dbReference>
<dbReference type="Proteomes" id="UP000694906">
    <property type="component" value="Unplaced"/>
</dbReference>
<dbReference type="Bgee" id="ENSHGLG00000019536">
    <property type="expression patterns" value="Expressed in liver and 7 other cell types or tissues"/>
</dbReference>
<dbReference type="GO" id="GO:0042627">
    <property type="term" value="C:chylomicron"/>
    <property type="evidence" value="ECO:0007669"/>
    <property type="project" value="TreeGrafter"/>
</dbReference>
<dbReference type="GO" id="GO:0030139">
    <property type="term" value="C:endocytic vesicle"/>
    <property type="evidence" value="ECO:0007669"/>
    <property type="project" value="Ensembl"/>
</dbReference>
<dbReference type="GO" id="GO:1903561">
    <property type="term" value="C:extracellular vesicle"/>
    <property type="evidence" value="ECO:0007669"/>
    <property type="project" value="TreeGrafter"/>
</dbReference>
<dbReference type="GO" id="GO:0034362">
    <property type="term" value="C:low-density lipoprotein particle"/>
    <property type="evidence" value="ECO:0007669"/>
    <property type="project" value="TreeGrafter"/>
</dbReference>
<dbReference type="GO" id="GO:0034366">
    <property type="term" value="C:spherical high-density lipoprotein particle"/>
    <property type="evidence" value="ECO:0007669"/>
    <property type="project" value="Ensembl"/>
</dbReference>
<dbReference type="GO" id="GO:0034361">
    <property type="term" value="C:very-low-density lipoprotein particle"/>
    <property type="evidence" value="ECO:0007669"/>
    <property type="project" value="Ensembl"/>
</dbReference>
<dbReference type="GO" id="GO:0001540">
    <property type="term" value="F:amyloid-beta binding"/>
    <property type="evidence" value="ECO:0007669"/>
    <property type="project" value="Ensembl"/>
</dbReference>
<dbReference type="GO" id="GO:0034191">
    <property type="term" value="F:apolipoprotein A-I receptor binding"/>
    <property type="evidence" value="ECO:0007669"/>
    <property type="project" value="Ensembl"/>
</dbReference>
<dbReference type="GO" id="GO:0045499">
    <property type="term" value="F:chemorepellent activity"/>
    <property type="evidence" value="ECO:0007669"/>
    <property type="project" value="Ensembl"/>
</dbReference>
<dbReference type="GO" id="GO:0015485">
    <property type="term" value="F:cholesterol binding"/>
    <property type="evidence" value="ECO:0007669"/>
    <property type="project" value="Ensembl"/>
</dbReference>
<dbReference type="GO" id="GO:0120020">
    <property type="term" value="F:cholesterol transfer activity"/>
    <property type="evidence" value="ECO:0007669"/>
    <property type="project" value="Ensembl"/>
</dbReference>
<dbReference type="GO" id="GO:0019899">
    <property type="term" value="F:enzyme binding"/>
    <property type="evidence" value="ECO:0007669"/>
    <property type="project" value="Ensembl"/>
</dbReference>
<dbReference type="GO" id="GO:0031072">
    <property type="term" value="F:heat shock protein binding"/>
    <property type="evidence" value="ECO:0007669"/>
    <property type="project" value="Ensembl"/>
</dbReference>
<dbReference type="GO" id="GO:0008035">
    <property type="term" value="F:high-density lipoprotein particle binding"/>
    <property type="evidence" value="ECO:0007669"/>
    <property type="project" value="Ensembl"/>
</dbReference>
<dbReference type="GO" id="GO:0070653">
    <property type="term" value="F:high-density lipoprotein particle receptor binding"/>
    <property type="evidence" value="ECO:0007669"/>
    <property type="project" value="Ensembl"/>
</dbReference>
<dbReference type="GO" id="GO:0060228">
    <property type="term" value="F:phosphatidylcholine-sterol O-acyltransferase activator activity"/>
    <property type="evidence" value="ECO:0007669"/>
    <property type="project" value="Ensembl"/>
</dbReference>
<dbReference type="GO" id="GO:0005543">
    <property type="term" value="F:phospholipid binding"/>
    <property type="evidence" value="ECO:0007669"/>
    <property type="project" value="Ensembl"/>
</dbReference>
<dbReference type="GO" id="GO:0042803">
    <property type="term" value="F:protein homodimerization activity"/>
    <property type="evidence" value="ECO:0000314"/>
    <property type="project" value="UniProtKB"/>
</dbReference>
<dbReference type="GO" id="GO:0030325">
    <property type="term" value="P:adrenal gland development"/>
    <property type="evidence" value="ECO:0007669"/>
    <property type="project" value="Ensembl"/>
</dbReference>
<dbReference type="GO" id="GO:0034205">
    <property type="term" value="P:amyloid-beta formation"/>
    <property type="evidence" value="ECO:0007669"/>
    <property type="project" value="Ensembl"/>
</dbReference>
<dbReference type="GO" id="GO:0043534">
    <property type="term" value="P:blood vessel endothelial cell migration"/>
    <property type="evidence" value="ECO:0007669"/>
    <property type="project" value="Ensembl"/>
</dbReference>
<dbReference type="GO" id="GO:0071402">
    <property type="term" value="P:cellular response to lipoprotein particle stimulus"/>
    <property type="evidence" value="ECO:0007669"/>
    <property type="project" value="Ensembl"/>
</dbReference>
<dbReference type="GO" id="GO:0006695">
    <property type="term" value="P:cholesterol biosynthetic process"/>
    <property type="evidence" value="ECO:0007669"/>
    <property type="project" value="Ensembl"/>
</dbReference>
<dbReference type="GO" id="GO:0033344">
    <property type="term" value="P:cholesterol efflux"/>
    <property type="evidence" value="ECO:0007669"/>
    <property type="project" value="Ensembl"/>
</dbReference>
<dbReference type="GO" id="GO:0042632">
    <property type="term" value="P:cholesterol homeostasis"/>
    <property type="evidence" value="ECO:0007669"/>
    <property type="project" value="Ensembl"/>
</dbReference>
<dbReference type="GO" id="GO:0070508">
    <property type="term" value="P:cholesterol import"/>
    <property type="evidence" value="ECO:0007669"/>
    <property type="project" value="Ensembl"/>
</dbReference>
<dbReference type="GO" id="GO:0001935">
    <property type="term" value="P:endothelial cell proliferation"/>
    <property type="evidence" value="ECO:0007669"/>
    <property type="project" value="Ensembl"/>
</dbReference>
<dbReference type="GO" id="GO:0007186">
    <property type="term" value="P:G protein-coupled receptor signaling pathway"/>
    <property type="evidence" value="ECO:0007669"/>
    <property type="project" value="Ensembl"/>
</dbReference>
<dbReference type="GO" id="GO:0008211">
    <property type="term" value="P:glucocorticoid metabolic process"/>
    <property type="evidence" value="ECO:0007669"/>
    <property type="project" value="Ensembl"/>
</dbReference>
<dbReference type="GO" id="GO:0034380">
    <property type="term" value="P:high-density lipoprotein particle assembly"/>
    <property type="evidence" value="ECO:0007669"/>
    <property type="project" value="Ensembl"/>
</dbReference>
<dbReference type="GO" id="GO:0034375">
    <property type="term" value="P:high-density lipoprotein particle remodeling"/>
    <property type="evidence" value="ECO:0007669"/>
    <property type="project" value="Ensembl"/>
</dbReference>
<dbReference type="GO" id="GO:0007229">
    <property type="term" value="P:integrin-mediated signaling pathway"/>
    <property type="evidence" value="ECO:0007669"/>
    <property type="project" value="Ensembl"/>
</dbReference>
<dbReference type="GO" id="GO:0019915">
    <property type="term" value="P:lipid storage"/>
    <property type="evidence" value="ECO:0007669"/>
    <property type="project" value="Ensembl"/>
</dbReference>
<dbReference type="GO" id="GO:0042158">
    <property type="term" value="P:lipoprotein biosynthetic process"/>
    <property type="evidence" value="ECO:0007669"/>
    <property type="project" value="Ensembl"/>
</dbReference>
<dbReference type="GO" id="GO:0060354">
    <property type="term" value="P:negative regulation of cell adhesion molecule production"/>
    <property type="evidence" value="ECO:0007669"/>
    <property type="project" value="Ensembl"/>
</dbReference>
<dbReference type="GO" id="GO:0002719">
    <property type="term" value="P:negative regulation of cytokine production involved in immune response"/>
    <property type="evidence" value="ECO:0007669"/>
    <property type="project" value="Ensembl"/>
</dbReference>
<dbReference type="GO" id="GO:0034115">
    <property type="term" value="P:negative regulation of heterotypic cell-cell adhesion"/>
    <property type="evidence" value="ECO:0007669"/>
    <property type="project" value="Ensembl"/>
</dbReference>
<dbReference type="GO" id="GO:0050728">
    <property type="term" value="P:negative regulation of inflammatory response"/>
    <property type="evidence" value="ECO:0007669"/>
    <property type="project" value="Ensembl"/>
</dbReference>
<dbReference type="GO" id="GO:0032691">
    <property type="term" value="P:negative regulation of interleukin-1 beta production"/>
    <property type="evidence" value="ECO:0007669"/>
    <property type="project" value="Ensembl"/>
</dbReference>
<dbReference type="GO" id="GO:0010804">
    <property type="term" value="P:negative regulation of tumor necrosis factor-mediated signaling pathway"/>
    <property type="evidence" value="ECO:0007669"/>
    <property type="project" value="Ensembl"/>
</dbReference>
<dbReference type="GO" id="GO:0010903">
    <property type="term" value="P:negative regulation of very-low-density lipoprotein particle remodeling"/>
    <property type="evidence" value="ECO:0007669"/>
    <property type="project" value="Ensembl"/>
</dbReference>
<dbReference type="GO" id="GO:0006656">
    <property type="term" value="P:phosphatidylcholine biosynthetic process"/>
    <property type="evidence" value="ECO:0007669"/>
    <property type="project" value="Ensembl"/>
</dbReference>
<dbReference type="GO" id="GO:0033700">
    <property type="term" value="P:phospholipid efflux"/>
    <property type="evidence" value="ECO:0007669"/>
    <property type="project" value="Ensembl"/>
</dbReference>
<dbReference type="GO" id="GO:0055091">
    <property type="term" value="P:phospholipid homeostasis"/>
    <property type="evidence" value="ECO:0007669"/>
    <property type="project" value="Ensembl"/>
</dbReference>
<dbReference type="GO" id="GO:0010875">
    <property type="term" value="P:positive regulation of cholesterol efflux"/>
    <property type="evidence" value="ECO:0000250"/>
    <property type="project" value="UniProtKB"/>
</dbReference>
<dbReference type="GO" id="GO:0090205">
    <property type="term" value="P:positive regulation of cholesterol metabolic process"/>
    <property type="evidence" value="ECO:0007669"/>
    <property type="project" value="Ensembl"/>
</dbReference>
<dbReference type="GO" id="GO:0050766">
    <property type="term" value="P:positive regulation of phagocytosis"/>
    <property type="evidence" value="ECO:0000250"/>
    <property type="project" value="UniProtKB"/>
</dbReference>
<dbReference type="GO" id="GO:1902995">
    <property type="term" value="P:positive regulation of phospholipid efflux"/>
    <property type="evidence" value="ECO:0000250"/>
    <property type="project" value="UniProtKB"/>
</dbReference>
<dbReference type="GO" id="GO:0035025">
    <property type="term" value="P:positive regulation of Rho protein signal transduction"/>
    <property type="evidence" value="ECO:0007669"/>
    <property type="project" value="Ensembl"/>
</dbReference>
<dbReference type="GO" id="GO:0051496">
    <property type="term" value="P:positive regulation of stress fiber assembly"/>
    <property type="evidence" value="ECO:0007669"/>
    <property type="project" value="Ensembl"/>
</dbReference>
<dbReference type="GO" id="GO:1900026">
    <property type="term" value="P:positive regulation of substrate adhesion-dependent cell spreading"/>
    <property type="evidence" value="ECO:0007669"/>
    <property type="project" value="Ensembl"/>
</dbReference>
<dbReference type="GO" id="GO:0050821">
    <property type="term" value="P:protein stabilization"/>
    <property type="evidence" value="ECO:0000250"/>
    <property type="project" value="UniProtKB"/>
</dbReference>
<dbReference type="GO" id="GO:0032489">
    <property type="term" value="P:regulation of Cdc42 protein signal transduction"/>
    <property type="evidence" value="ECO:0007669"/>
    <property type="project" value="Ensembl"/>
</dbReference>
<dbReference type="GO" id="GO:0030300">
    <property type="term" value="P:regulation of intestinal cholesterol absorption"/>
    <property type="evidence" value="ECO:0007669"/>
    <property type="project" value="Ensembl"/>
</dbReference>
<dbReference type="GO" id="GO:0043691">
    <property type="term" value="P:reverse cholesterol transport"/>
    <property type="evidence" value="ECO:0007669"/>
    <property type="project" value="Ensembl"/>
</dbReference>
<dbReference type="GO" id="GO:0070328">
    <property type="term" value="P:triglyceride homeostasis"/>
    <property type="evidence" value="ECO:0007669"/>
    <property type="project" value="Ensembl"/>
</dbReference>
<dbReference type="GO" id="GO:0051180">
    <property type="term" value="P:vitamin transport"/>
    <property type="evidence" value="ECO:0007669"/>
    <property type="project" value="Ensembl"/>
</dbReference>
<dbReference type="FunFam" id="1.20.120.20:FF:000001">
    <property type="entry name" value="Apolipoprotein A-I"/>
    <property type="match status" value="1"/>
</dbReference>
<dbReference type="FunFam" id="1.20.5.20:FF:000001">
    <property type="entry name" value="apolipoprotein A-I"/>
    <property type="match status" value="1"/>
</dbReference>
<dbReference type="Gene3D" id="1.20.5.20">
    <property type="match status" value="1"/>
</dbReference>
<dbReference type="Gene3D" id="6.10.140.380">
    <property type="match status" value="1"/>
</dbReference>
<dbReference type="Gene3D" id="1.20.120.20">
    <property type="entry name" value="Apolipoprotein"/>
    <property type="match status" value="1"/>
</dbReference>
<dbReference type="InterPro" id="IPR000074">
    <property type="entry name" value="ApoA_E"/>
</dbReference>
<dbReference type="InterPro" id="IPR050163">
    <property type="entry name" value="Apolipoprotein_A1/A4/E"/>
</dbReference>
<dbReference type="PANTHER" id="PTHR18976">
    <property type="entry name" value="APOLIPOPROTEIN"/>
    <property type="match status" value="1"/>
</dbReference>
<dbReference type="PANTHER" id="PTHR18976:SF11">
    <property type="entry name" value="APOLIPOPROTEIN A-I"/>
    <property type="match status" value="1"/>
</dbReference>
<dbReference type="Pfam" id="PF01442">
    <property type="entry name" value="Apolipoprotein"/>
    <property type="match status" value="1"/>
</dbReference>
<dbReference type="SUPFAM" id="SSF58113">
    <property type="entry name" value="Apolipoprotein A-I"/>
    <property type="match status" value="1"/>
</dbReference>
<proteinExistence type="evidence at protein level"/>
<evidence type="ECO:0000250" key="1"/>
<evidence type="ECO:0000250" key="2">
    <source>
        <dbReference type="UniProtKB" id="P02647"/>
    </source>
</evidence>
<evidence type="ECO:0000250" key="3">
    <source>
        <dbReference type="UniProtKB" id="P04639"/>
    </source>
</evidence>
<evidence type="ECO:0000255" key="4"/>
<evidence type="ECO:0000269" key="5">
    <source>
    </source>
</evidence>
<evidence type="ECO:0000305" key="6"/>
<organism>
    <name type="scientific">Heterocephalus glaber</name>
    <name type="common">Naked mole rat</name>
    <dbReference type="NCBI Taxonomy" id="10181"/>
    <lineage>
        <taxon>Eukaryota</taxon>
        <taxon>Metazoa</taxon>
        <taxon>Chordata</taxon>
        <taxon>Craniata</taxon>
        <taxon>Vertebrata</taxon>
        <taxon>Euteleostomi</taxon>
        <taxon>Mammalia</taxon>
        <taxon>Eutheria</taxon>
        <taxon>Euarchontoglires</taxon>
        <taxon>Glires</taxon>
        <taxon>Rodentia</taxon>
        <taxon>Hystricomorpha</taxon>
        <taxon>Bathyergidae</taxon>
        <taxon>Heterocephalus</taxon>
    </lineage>
</organism>
<accession>G5BQH5</accession>
<feature type="signal peptide" evidence="4">
    <location>
        <begin position="1"/>
        <end position="18"/>
    </location>
</feature>
<feature type="chain" id="PRO_0000425322" description="Proapolipoprotein A-I">
    <location>
        <begin position="19"/>
        <end position="264"/>
    </location>
</feature>
<feature type="chain" id="PRO_0000425256" description="Apolipoprotein A-I">
    <location>
        <begin position="25"/>
        <end position="264"/>
    </location>
</feature>
<feature type="chain" id="PRO_0000425257" description="Truncated apolipoprotein A-I">
    <location>
        <begin position="25"/>
        <end position="263"/>
    </location>
</feature>
<feature type="repeat" description="1">
    <location>
        <begin position="67"/>
        <end position="88"/>
    </location>
</feature>
<feature type="repeat" description="2">
    <location>
        <begin position="89"/>
        <end position="110"/>
    </location>
</feature>
<feature type="repeat" description="3; half-length">
    <location>
        <begin position="111"/>
        <end position="121"/>
    </location>
</feature>
<feature type="repeat" description="4">
    <location>
        <begin position="122"/>
        <end position="142"/>
    </location>
</feature>
<feature type="repeat" description="5">
    <location>
        <begin position="144"/>
        <end position="165"/>
    </location>
</feature>
<feature type="repeat" description="6">
    <location>
        <begin position="166"/>
        <end position="187"/>
    </location>
</feature>
<feature type="repeat" description="7">
    <location>
        <begin position="188"/>
        <end position="208"/>
    </location>
</feature>
<feature type="repeat" description="8">
    <location>
        <begin position="209"/>
        <end position="229"/>
    </location>
</feature>
<feature type="repeat" description="9; half-length">
    <location>
        <begin position="230"/>
        <end position="240"/>
    </location>
</feature>
<feature type="repeat" description="10">
    <location>
        <begin position="241"/>
        <end position="264"/>
    </location>
</feature>
<feature type="region of interest" description="10 X approximate tandem repeats" evidence="1">
    <location>
        <begin position="67"/>
        <end position="264"/>
    </location>
</feature>
<feature type="modified residue" description="Methionine sulfoxide" evidence="1">
    <location>
        <position position="109"/>
    </location>
</feature>
<feature type="modified residue" description="Methionine sulfoxide" evidence="1">
    <location>
        <position position="193"/>
    </location>
</feature>
<feature type="modified residue" description="Methionine sulfoxide" evidence="1">
    <location>
        <position position="240"/>
    </location>
</feature>
<keyword id="KW-0153">Cholesterol metabolism</keyword>
<keyword id="KW-0325">Glycoprotein</keyword>
<keyword id="KW-0345">HDL</keyword>
<keyword id="KW-0443">Lipid metabolism</keyword>
<keyword id="KW-0445">Lipid transport</keyword>
<keyword id="KW-0449">Lipoprotein</keyword>
<keyword id="KW-0558">Oxidation</keyword>
<keyword id="KW-0564">Palmitate</keyword>
<keyword id="KW-0597">Phosphoprotein</keyword>
<keyword id="KW-1185">Reference proteome</keyword>
<keyword id="KW-0677">Repeat</keyword>
<keyword id="KW-0964">Secreted</keyword>
<keyword id="KW-0732">Signal</keyword>
<keyword id="KW-0753">Steroid metabolism</keyword>
<keyword id="KW-1207">Sterol metabolism</keyword>
<keyword id="KW-0813">Transport</keyword>
<gene>
    <name type="primary">Apoa1</name>
</gene>